<feature type="chain" id="PRO_0000185373" description="Uncharacterized family 31 glucosidase ORF2">
    <location>
        <begin position="1"/>
        <end position="529" status="greater than"/>
    </location>
</feature>
<feature type="active site" description="Nucleophile" evidence="1">
    <location>
        <position position="389"/>
    </location>
</feature>
<feature type="active site" evidence="1">
    <location>
        <position position="392"/>
    </location>
</feature>
<feature type="active site" description="Proton donor" evidence="1">
    <location>
        <position position="459"/>
    </location>
</feature>
<feature type="non-terminal residue">
    <location>
        <position position="529"/>
    </location>
</feature>
<name>YCR2_PSEVU</name>
<dbReference type="EC" id="3.2.1.-"/>
<dbReference type="EMBL" id="M87280">
    <property type="protein sequence ID" value="AAA64974.1"/>
    <property type="molecule type" value="Genomic_DNA"/>
</dbReference>
<dbReference type="PIR" id="S52976">
    <property type="entry name" value="S52976"/>
</dbReference>
<dbReference type="SMR" id="Q01336"/>
<dbReference type="CAZy" id="GH31">
    <property type="family name" value="Glycoside Hydrolase Family 31"/>
</dbReference>
<dbReference type="GO" id="GO:0030246">
    <property type="term" value="F:carbohydrate binding"/>
    <property type="evidence" value="ECO:0007669"/>
    <property type="project" value="InterPro"/>
</dbReference>
<dbReference type="GO" id="GO:0004553">
    <property type="term" value="F:hydrolase activity, hydrolyzing O-glycosyl compounds"/>
    <property type="evidence" value="ECO:0007669"/>
    <property type="project" value="InterPro"/>
</dbReference>
<dbReference type="GO" id="GO:0005975">
    <property type="term" value="P:carbohydrate metabolic process"/>
    <property type="evidence" value="ECO:0007669"/>
    <property type="project" value="InterPro"/>
</dbReference>
<dbReference type="CDD" id="cd14752">
    <property type="entry name" value="GH31_N"/>
    <property type="match status" value="1"/>
</dbReference>
<dbReference type="CDD" id="cd06591">
    <property type="entry name" value="GH31_xylosidase_XylS"/>
    <property type="match status" value="1"/>
</dbReference>
<dbReference type="Gene3D" id="3.20.20.80">
    <property type="entry name" value="Glycosidases"/>
    <property type="match status" value="1"/>
</dbReference>
<dbReference type="Gene3D" id="2.60.40.1760">
    <property type="entry name" value="glycosyl hydrolase (family 31)"/>
    <property type="match status" value="1"/>
</dbReference>
<dbReference type="InterPro" id="IPR011013">
    <property type="entry name" value="Gal_mutarotase_sf_dom"/>
</dbReference>
<dbReference type="InterPro" id="IPR025887">
    <property type="entry name" value="Glyco_hydro_31_N_dom"/>
</dbReference>
<dbReference type="InterPro" id="IPR000322">
    <property type="entry name" value="Glyco_hydro_31_TIM"/>
</dbReference>
<dbReference type="InterPro" id="IPR017853">
    <property type="entry name" value="Glycoside_hydrolase_SF"/>
</dbReference>
<dbReference type="InterPro" id="IPR051816">
    <property type="entry name" value="Glycosyl_Hydrolase_31"/>
</dbReference>
<dbReference type="PANTHER" id="PTHR43863">
    <property type="entry name" value="HYDROLASE, PUTATIVE (AFU_ORTHOLOGUE AFUA_1G03140)-RELATED"/>
    <property type="match status" value="1"/>
</dbReference>
<dbReference type="PANTHER" id="PTHR43863:SF2">
    <property type="entry name" value="MALTASE-GLUCOAMYLASE"/>
    <property type="match status" value="1"/>
</dbReference>
<dbReference type="Pfam" id="PF13802">
    <property type="entry name" value="Gal_mutarotas_2"/>
    <property type="match status" value="1"/>
</dbReference>
<dbReference type="Pfam" id="PF01055">
    <property type="entry name" value="Glyco_hydro_31_2nd"/>
    <property type="match status" value="1"/>
</dbReference>
<dbReference type="SUPFAM" id="SSF51445">
    <property type="entry name" value="(Trans)glycosidases"/>
    <property type="match status" value="1"/>
</dbReference>
<dbReference type="SUPFAM" id="SSF74650">
    <property type="entry name" value="Galactose mutarotase-like"/>
    <property type="match status" value="1"/>
</dbReference>
<sequence length="529" mass="60812">MSELIEHANAIEWRFERQILRLEPWGKNSLRVRATCAPEFTSALHALLTPESCQAEILRDAETLTLRNGNISAVLNLKGQLAFYNQRGELLLEEMWRQRSTVGIGASEKSQDKYVSALKLDGREFKPLPGGKYQLTVRFEARQGEKLYGMGQYQQPWLDLKGCSLELAQRNSQASVPFVQSSLGYGLLWNNPAIGEASFAKNHSQWTSRVTQEMDYWITAGDSVMEITRQYAKATGTPPAAPEFISGLWQCKLRYRTQQEVLDVAREYHRRNLPLSVMVIDFFHWPNQGTWCFDPVDWPDPRAMVEELESMGIRLMVSVWPTVEARSPLFPQMKAKGWLVTSDRGVQVNLDFMGNTTFFDATHPQARQFVWDTVKKNYFDYGIKLFWLDEAEPEYRAYDFDNYRYHAGPVLEVGNRYPRDFAQGFYDGLRAEGENEIVNLVRCSWAGSQRYGVLAWSGDVHSSFHSFRNQLAAGLNMGLAGIPWWTTDIGGFQGGNIHDPAFHELLIRWFQWAVFCPVLRMHGYREPRI</sequence>
<keyword id="KW-0326">Glycosidase</keyword>
<keyword id="KW-0378">Hydrolase</keyword>
<evidence type="ECO:0000250" key="1"/>
<evidence type="ECO:0000305" key="2"/>
<accession>Q01336</accession>
<reference key="1">
    <citation type="journal article" date="1994" name="Mol. Gen. Genet.">
        <title>Functional assignment of Erwinia herbicola Eho10 carotenoid genes expressed in Escherichia coli.</title>
        <authorList>
            <person name="Hundle B."/>
            <person name="Alberti M."/>
            <person name="Nievelstein V."/>
            <person name="Beyer P."/>
            <person name="Kleinig H."/>
            <person name="Armstrong G.A."/>
            <person name="Burke D.H."/>
            <person name="Hearst J.E."/>
        </authorList>
    </citation>
    <scope>NUCLEOTIDE SEQUENCE [GENOMIC DNA]</scope>
    <source>
        <strain>ATCC 39368 / Eho10</strain>
    </source>
</reference>
<organism>
    <name type="scientific">Pseudescherichia vulneris</name>
    <name type="common">Escherichia vulneris</name>
    <dbReference type="NCBI Taxonomy" id="566"/>
    <lineage>
        <taxon>Bacteria</taxon>
        <taxon>Pseudomonadati</taxon>
        <taxon>Pseudomonadota</taxon>
        <taxon>Gammaproteobacteria</taxon>
        <taxon>Enterobacterales</taxon>
        <taxon>Enterobacteriaceae</taxon>
        <taxon>Pseudescherichia</taxon>
    </lineage>
</organism>
<protein>
    <recommendedName>
        <fullName>Uncharacterized family 31 glucosidase ORF2</fullName>
        <ecNumber>3.2.1.-</ecNumber>
    </recommendedName>
</protein>
<comment type="similarity">
    <text evidence="2">Belongs to the glycosyl hydrolase 31 family.</text>
</comment>
<proteinExistence type="inferred from homology"/>